<sequence length="534" mass="58739">MTREDLPDSTPEESKLPMEFQSPLLEKRRRPVVHPSAPAPLPKDYAFTFFDPNDPACQEILLDPQTSVPELFAIIRQWVPQVQHKIDIIGSEILKRGCHVNDRDGLTDMTLLHYACKAGAHGVGDPAAAVRLTNQLLLLGADITLRSRWTNMNALHYAAYFDVPELLRTLLKASKPKVLNSTCSDFNHGTAMHIAASNLCLGAVKCLLEHGANPSARNSKSQVPADVVPDPMDMGLDKADSAMIAKELKQLLLDAVPLTCNLPKITLPNYDNIPGNLMLASLGLKLGDRILLDAEKAGTLRFCGTTEFASGQWVGVELDEPDGKNDGSVGGIRYFICPPKQGIFAPVSKISKAPDQPPSSVTSTPRTPRVDFSRVTGKGRKEKKATHKKSLSVGSLDREGLKIEIGDQVLVAGQKQGIVRFYGKTDFAPGYWFGIELEKPTGKHDGSVFGVRYFTCSAKNGVFAPPSRVQRMGGPKDPQTDNNDMKKVHQVTMTQPKRNFTKVRTPKEIASENSMSRILFCCWFPWLLRAEMKS</sequence>
<organism>
    <name type="scientific">Xenopus laevis</name>
    <name type="common">African clawed frog</name>
    <dbReference type="NCBI Taxonomy" id="8355"/>
    <lineage>
        <taxon>Eukaryota</taxon>
        <taxon>Metazoa</taxon>
        <taxon>Chordata</taxon>
        <taxon>Craniata</taxon>
        <taxon>Vertebrata</taxon>
        <taxon>Euteleostomi</taxon>
        <taxon>Amphibia</taxon>
        <taxon>Batrachia</taxon>
        <taxon>Anura</taxon>
        <taxon>Pipoidea</taxon>
        <taxon>Pipidae</taxon>
        <taxon>Xenopodinae</taxon>
        <taxon>Xenopus</taxon>
        <taxon>Xenopus</taxon>
    </lineage>
</organism>
<comment type="function">
    <text evidence="1">Functions as a cytoplasmic linker protein. Involved in TGN-endosome dynamics (By similarity).</text>
</comment>
<comment type="subunit">
    <text evidence="1">Homodimer.</text>
</comment>
<comment type="subcellular location">
    <subcellularLocation>
        <location>Cytoplasm</location>
    </subcellularLocation>
    <subcellularLocation>
        <location>Golgi apparatus</location>
        <location>Golgi stack</location>
    </subcellularLocation>
    <text>Localized to Golgi stacks as well as on tubulovesicular elements juxtaposed to Golgi cisternae.</text>
</comment>
<comment type="domain">
    <text evidence="1">Microtubule association is inhibited by the ANK repeats and the Golgi localization region (GoLD).</text>
</comment>
<comment type="miscellaneous">
    <text evidence="1">The N-terminal half is dispensable for proper Golgi targeting, whereas the GoLD region is required.</text>
</comment>
<gene>
    <name type="primary">clip3</name>
    <name type="synonym">clipr59</name>
</gene>
<reference key="1">
    <citation type="submission" date="2004-11" db="EMBL/GenBank/DDBJ databases">
        <authorList>
            <consortium name="NIH - Xenopus Gene Collection (XGC) project"/>
        </authorList>
    </citation>
    <scope>NUCLEOTIDE SEQUENCE [LARGE SCALE MRNA]</scope>
    <source>
        <tissue>Eye</tissue>
    </source>
</reference>
<feature type="chain" id="PRO_0000076214" description="CAP-Gly domain-containing linker protein 3">
    <location>
        <begin position="1"/>
        <end position="534"/>
    </location>
</feature>
<feature type="repeat" description="ANK 1">
    <location>
        <begin position="107"/>
        <end position="148"/>
    </location>
</feature>
<feature type="repeat" description="ANK 2">
    <location>
        <begin position="150"/>
        <end position="173"/>
    </location>
</feature>
<feature type="repeat" description="ANK 3">
    <location>
        <begin position="187"/>
        <end position="299"/>
    </location>
</feature>
<feature type="domain" description="CAP-Gly 1" evidence="2">
    <location>
        <begin position="304"/>
        <end position="346"/>
    </location>
</feature>
<feature type="domain" description="CAP-Gly 2" evidence="2">
    <location>
        <begin position="423"/>
        <end position="465"/>
    </location>
</feature>
<feature type="region of interest" description="Disordered" evidence="3">
    <location>
        <begin position="1"/>
        <end position="33"/>
    </location>
</feature>
<feature type="region of interest" description="Disordered" evidence="3">
    <location>
        <begin position="349"/>
        <end position="391"/>
    </location>
</feature>
<feature type="region of interest" description="GoLD">
    <location>
        <begin position="475"/>
        <end position="534"/>
    </location>
</feature>
<feature type="compositionally biased region" description="Basic and acidic residues" evidence="3">
    <location>
        <begin position="1"/>
        <end position="16"/>
    </location>
</feature>
<feature type="compositionally biased region" description="Low complexity" evidence="3">
    <location>
        <begin position="358"/>
        <end position="367"/>
    </location>
</feature>
<feature type="compositionally biased region" description="Basic residues" evidence="3">
    <location>
        <begin position="377"/>
        <end position="390"/>
    </location>
</feature>
<dbReference type="EMBL" id="BC086287">
    <property type="protein sequence ID" value="AAH86287.1"/>
    <property type="molecule type" value="mRNA"/>
</dbReference>
<dbReference type="RefSeq" id="NP_001088641.1">
    <property type="nucleotide sequence ID" value="NM_001095172.1"/>
</dbReference>
<dbReference type="SMR" id="Q5U243"/>
<dbReference type="DNASU" id="495693"/>
<dbReference type="GeneID" id="495693"/>
<dbReference type="KEGG" id="xla:495693"/>
<dbReference type="AGR" id="Xenbase:XB-GENE-6253473"/>
<dbReference type="CTD" id="495693"/>
<dbReference type="Xenbase" id="XB-GENE-6253473">
    <property type="gene designation" value="clip3.S"/>
</dbReference>
<dbReference type="OMA" id="RERPMIH"/>
<dbReference type="OrthoDB" id="2130750at2759"/>
<dbReference type="Proteomes" id="UP000186698">
    <property type="component" value="Chromosome 8S"/>
</dbReference>
<dbReference type="Bgee" id="495693">
    <property type="expression patterns" value="Expressed in brain and 12 other cell types or tissues"/>
</dbReference>
<dbReference type="GO" id="GO:0005938">
    <property type="term" value="C:cell cortex"/>
    <property type="evidence" value="ECO:0000318"/>
    <property type="project" value="GO_Central"/>
</dbReference>
<dbReference type="GO" id="GO:0005795">
    <property type="term" value="C:Golgi stack"/>
    <property type="evidence" value="ECO:0007669"/>
    <property type="project" value="UniProtKB-SubCell"/>
</dbReference>
<dbReference type="GO" id="GO:0035371">
    <property type="term" value="C:microtubule plus-end"/>
    <property type="evidence" value="ECO:0000318"/>
    <property type="project" value="GO_Central"/>
</dbReference>
<dbReference type="GO" id="GO:0005634">
    <property type="term" value="C:nucleus"/>
    <property type="evidence" value="ECO:0000318"/>
    <property type="project" value="GO_Central"/>
</dbReference>
<dbReference type="GO" id="GO:0051010">
    <property type="term" value="F:microtubule plus-end binding"/>
    <property type="evidence" value="ECO:0000318"/>
    <property type="project" value="GO_Central"/>
</dbReference>
<dbReference type="GO" id="GO:0031122">
    <property type="term" value="P:cytoplasmic microtubule organization"/>
    <property type="evidence" value="ECO:0000318"/>
    <property type="project" value="GO_Central"/>
</dbReference>
<dbReference type="FunFam" id="1.25.40.20:FF:000044">
    <property type="entry name" value="CAP-Gly domain containing linker protein 3"/>
    <property type="match status" value="1"/>
</dbReference>
<dbReference type="FunFam" id="2.30.30.190:FF:000005">
    <property type="entry name" value="CAP-Gly domain containing linker protein 3"/>
    <property type="match status" value="1"/>
</dbReference>
<dbReference type="Gene3D" id="1.25.40.20">
    <property type="entry name" value="Ankyrin repeat-containing domain"/>
    <property type="match status" value="1"/>
</dbReference>
<dbReference type="Gene3D" id="2.30.30.190">
    <property type="entry name" value="CAP Gly-rich-like domain"/>
    <property type="match status" value="2"/>
</dbReference>
<dbReference type="InterPro" id="IPR002110">
    <property type="entry name" value="Ankyrin_rpt"/>
</dbReference>
<dbReference type="InterPro" id="IPR036770">
    <property type="entry name" value="Ankyrin_rpt-contain_sf"/>
</dbReference>
<dbReference type="InterPro" id="IPR036859">
    <property type="entry name" value="CAP-Gly_dom_sf"/>
</dbReference>
<dbReference type="InterPro" id="IPR000938">
    <property type="entry name" value="CAP-Gly_domain"/>
</dbReference>
<dbReference type="PANTHER" id="PTHR18916:SF77">
    <property type="entry name" value="CAP-GLY DOMAIN-CONTAINING LINKER PROTEIN 3"/>
    <property type="match status" value="1"/>
</dbReference>
<dbReference type="PANTHER" id="PTHR18916">
    <property type="entry name" value="DYNACTIN 1-RELATED MICROTUBULE-BINDING"/>
    <property type="match status" value="1"/>
</dbReference>
<dbReference type="Pfam" id="PF12796">
    <property type="entry name" value="Ank_2"/>
    <property type="match status" value="1"/>
</dbReference>
<dbReference type="Pfam" id="PF01302">
    <property type="entry name" value="CAP_GLY"/>
    <property type="match status" value="2"/>
</dbReference>
<dbReference type="SMART" id="SM00248">
    <property type="entry name" value="ANK"/>
    <property type="match status" value="3"/>
</dbReference>
<dbReference type="SMART" id="SM01052">
    <property type="entry name" value="CAP_GLY"/>
    <property type="match status" value="2"/>
</dbReference>
<dbReference type="SUPFAM" id="SSF48403">
    <property type="entry name" value="Ankyrin repeat"/>
    <property type="match status" value="1"/>
</dbReference>
<dbReference type="SUPFAM" id="SSF74924">
    <property type="entry name" value="Cap-Gly domain"/>
    <property type="match status" value="2"/>
</dbReference>
<dbReference type="PROSITE" id="PS50297">
    <property type="entry name" value="ANK_REP_REGION"/>
    <property type="match status" value="1"/>
</dbReference>
<dbReference type="PROSITE" id="PS50088">
    <property type="entry name" value="ANK_REPEAT"/>
    <property type="match status" value="1"/>
</dbReference>
<dbReference type="PROSITE" id="PS00845">
    <property type="entry name" value="CAP_GLY_1"/>
    <property type="match status" value="2"/>
</dbReference>
<dbReference type="PROSITE" id="PS50245">
    <property type="entry name" value="CAP_GLY_2"/>
    <property type="match status" value="2"/>
</dbReference>
<name>CLIP3_XENLA</name>
<evidence type="ECO:0000250" key="1"/>
<evidence type="ECO:0000255" key="2">
    <source>
        <dbReference type="PROSITE-ProRule" id="PRU00045"/>
    </source>
</evidence>
<evidence type="ECO:0000256" key="3">
    <source>
        <dbReference type="SAM" id="MobiDB-lite"/>
    </source>
</evidence>
<proteinExistence type="evidence at transcript level"/>
<keyword id="KW-0040">ANK repeat</keyword>
<keyword id="KW-0963">Cytoplasm</keyword>
<keyword id="KW-0333">Golgi apparatus</keyword>
<keyword id="KW-1185">Reference proteome</keyword>
<keyword id="KW-0677">Repeat</keyword>
<protein>
    <recommendedName>
        <fullName>CAP-Gly domain-containing linker protein 3</fullName>
    </recommendedName>
    <alternativeName>
        <fullName>Cytoplasmic linker protein 170-related 59 kDa protein</fullName>
        <shortName>CLIP-170-related 59 kDa protein</shortName>
        <shortName>CLIPR-59</shortName>
    </alternativeName>
</protein>
<accession>Q5U243</accession>